<dbReference type="EC" id="3.1.3.11" evidence="1"/>
<dbReference type="EMBL" id="CP000781">
    <property type="protein sequence ID" value="ABS67160.1"/>
    <property type="molecule type" value="Genomic_DNA"/>
</dbReference>
<dbReference type="SMR" id="A7IGL7"/>
<dbReference type="STRING" id="78245.Xaut_1915"/>
<dbReference type="KEGG" id="xau:Xaut_1915"/>
<dbReference type="eggNOG" id="COG0158">
    <property type="taxonomic scope" value="Bacteria"/>
</dbReference>
<dbReference type="HOGENOM" id="CLU_039977_0_0_5"/>
<dbReference type="OrthoDB" id="9806756at2"/>
<dbReference type="PhylomeDB" id="A7IGL7"/>
<dbReference type="UniPathway" id="UPA00138"/>
<dbReference type="Proteomes" id="UP000002417">
    <property type="component" value="Chromosome"/>
</dbReference>
<dbReference type="GO" id="GO:0005829">
    <property type="term" value="C:cytosol"/>
    <property type="evidence" value="ECO:0007669"/>
    <property type="project" value="TreeGrafter"/>
</dbReference>
<dbReference type="GO" id="GO:0042132">
    <property type="term" value="F:fructose 1,6-bisphosphate 1-phosphatase activity"/>
    <property type="evidence" value="ECO:0007669"/>
    <property type="project" value="UniProtKB-UniRule"/>
</dbReference>
<dbReference type="GO" id="GO:0000287">
    <property type="term" value="F:magnesium ion binding"/>
    <property type="evidence" value="ECO:0007669"/>
    <property type="project" value="UniProtKB-UniRule"/>
</dbReference>
<dbReference type="GO" id="GO:0030388">
    <property type="term" value="P:fructose 1,6-bisphosphate metabolic process"/>
    <property type="evidence" value="ECO:0007669"/>
    <property type="project" value="TreeGrafter"/>
</dbReference>
<dbReference type="GO" id="GO:0006002">
    <property type="term" value="P:fructose 6-phosphate metabolic process"/>
    <property type="evidence" value="ECO:0007669"/>
    <property type="project" value="TreeGrafter"/>
</dbReference>
<dbReference type="GO" id="GO:0006000">
    <property type="term" value="P:fructose metabolic process"/>
    <property type="evidence" value="ECO:0007669"/>
    <property type="project" value="TreeGrafter"/>
</dbReference>
<dbReference type="GO" id="GO:0006094">
    <property type="term" value="P:gluconeogenesis"/>
    <property type="evidence" value="ECO:0007669"/>
    <property type="project" value="UniProtKB-UniRule"/>
</dbReference>
<dbReference type="GO" id="GO:0005986">
    <property type="term" value="P:sucrose biosynthetic process"/>
    <property type="evidence" value="ECO:0007669"/>
    <property type="project" value="TreeGrafter"/>
</dbReference>
<dbReference type="CDD" id="cd00354">
    <property type="entry name" value="FBPase"/>
    <property type="match status" value="1"/>
</dbReference>
<dbReference type="FunFam" id="3.40.190.80:FF:000011">
    <property type="entry name" value="Fructose-1,6-bisphosphatase class 1"/>
    <property type="match status" value="1"/>
</dbReference>
<dbReference type="Gene3D" id="3.40.190.80">
    <property type="match status" value="1"/>
</dbReference>
<dbReference type="Gene3D" id="3.30.540.10">
    <property type="entry name" value="Fructose-1,6-Bisphosphatase, subunit A, domain 1"/>
    <property type="match status" value="1"/>
</dbReference>
<dbReference type="HAMAP" id="MF_01855">
    <property type="entry name" value="FBPase_class1"/>
    <property type="match status" value="1"/>
</dbReference>
<dbReference type="InterPro" id="IPR044015">
    <property type="entry name" value="FBPase_C_dom"/>
</dbReference>
<dbReference type="InterPro" id="IPR000146">
    <property type="entry name" value="FBPase_class-1"/>
</dbReference>
<dbReference type="InterPro" id="IPR033391">
    <property type="entry name" value="FBPase_N"/>
</dbReference>
<dbReference type="InterPro" id="IPR028343">
    <property type="entry name" value="FBPtase"/>
</dbReference>
<dbReference type="InterPro" id="IPR020548">
    <property type="entry name" value="Fructose_bisphosphatase_AS"/>
</dbReference>
<dbReference type="NCBIfam" id="NF006779">
    <property type="entry name" value="PRK09293.1-3"/>
    <property type="match status" value="1"/>
</dbReference>
<dbReference type="NCBIfam" id="NF006780">
    <property type="entry name" value="PRK09293.1-4"/>
    <property type="match status" value="1"/>
</dbReference>
<dbReference type="PANTHER" id="PTHR11556">
    <property type="entry name" value="FRUCTOSE-1,6-BISPHOSPHATASE-RELATED"/>
    <property type="match status" value="1"/>
</dbReference>
<dbReference type="PANTHER" id="PTHR11556:SF35">
    <property type="entry name" value="SEDOHEPTULOSE-1,7-BISPHOSPHATASE, CHLOROPLASTIC"/>
    <property type="match status" value="1"/>
</dbReference>
<dbReference type="Pfam" id="PF00316">
    <property type="entry name" value="FBPase"/>
    <property type="match status" value="1"/>
</dbReference>
<dbReference type="Pfam" id="PF18913">
    <property type="entry name" value="FBPase_C"/>
    <property type="match status" value="1"/>
</dbReference>
<dbReference type="PIRSF" id="PIRSF500210">
    <property type="entry name" value="FBPtase"/>
    <property type="match status" value="1"/>
</dbReference>
<dbReference type="PIRSF" id="PIRSF000904">
    <property type="entry name" value="FBPtase_SBPase"/>
    <property type="match status" value="1"/>
</dbReference>
<dbReference type="PRINTS" id="PR00115">
    <property type="entry name" value="F16BPHPHTASE"/>
</dbReference>
<dbReference type="SUPFAM" id="SSF56655">
    <property type="entry name" value="Carbohydrate phosphatase"/>
    <property type="match status" value="1"/>
</dbReference>
<dbReference type="PROSITE" id="PS00124">
    <property type="entry name" value="FBPASE"/>
    <property type="match status" value="1"/>
</dbReference>
<organism>
    <name type="scientific">Xanthobacter autotrophicus (strain ATCC BAA-1158 / Py2)</name>
    <dbReference type="NCBI Taxonomy" id="78245"/>
    <lineage>
        <taxon>Bacteria</taxon>
        <taxon>Pseudomonadati</taxon>
        <taxon>Pseudomonadota</taxon>
        <taxon>Alphaproteobacteria</taxon>
        <taxon>Hyphomicrobiales</taxon>
        <taxon>Xanthobacteraceae</taxon>
        <taxon>Xanthobacter</taxon>
    </lineage>
</organism>
<gene>
    <name evidence="1" type="primary">fbp1</name>
    <name type="ordered locus">Xaut_1915</name>
</gene>
<comment type="catalytic activity">
    <reaction evidence="1">
        <text>beta-D-fructose 1,6-bisphosphate + H2O = beta-D-fructose 6-phosphate + phosphate</text>
        <dbReference type="Rhea" id="RHEA:11064"/>
        <dbReference type="ChEBI" id="CHEBI:15377"/>
        <dbReference type="ChEBI" id="CHEBI:32966"/>
        <dbReference type="ChEBI" id="CHEBI:43474"/>
        <dbReference type="ChEBI" id="CHEBI:57634"/>
        <dbReference type="EC" id="3.1.3.11"/>
    </reaction>
</comment>
<comment type="cofactor">
    <cofactor evidence="1">
        <name>Mg(2+)</name>
        <dbReference type="ChEBI" id="CHEBI:18420"/>
    </cofactor>
    <text evidence="1">Binds 2 magnesium ions per subunit.</text>
</comment>
<comment type="pathway">
    <text evidence="1">Carbohydrate biosynthesis; gluconeogenesis.</text>
</comment>
<comment type="subunit">
    <text evidence="1">Homotetramer.</text>
</comment>
<comment type="subcellular location">
    <subcellularLocation>
        <location evidence="1">Cytoplasm</location>
    </subcellularLocation>
</comment>
<comment type="similarity">
    <text evidence="1">Belongs to the FBPase class 1 family.</text>
</comment>
<reference key="1">
    <citation type="submission" date="2007-07" db="EMBL/GenBank/DDBJ databases">
        <title>Complete sequence of chromosome of Xanthobacter autotrophicus Py2.</title>
        <authorList>
            <consortium name="US DOE Joint Genome Institute"/>
            <person name="Copeland A."/>
            <person name="Lucas S."/>
            <person name="Lapidus A."/>
            <person name="Barry K."/>
            <person name="Glavina del Rio T."/>
            <person name="Hammon N."/>
            <person name="Israni S."/>
            <person name="Dalin E."/>
            <person name="Tice H."/>
            <person name="Pitluck S."/>
            <person name="Sims D."/>
            <person name="Brettin T."/>
            <person name="Bruce D."/>
            <person name="Detter J.C."/>
            <person name="Han C."/>
            <person name="Tapia R."/>
            <person name="Brainard J."/>
            <person name="Schmutz J."/>
            <person name="Larimer F."/>
            <person name="Land M."/>
            <person name="Hauser L."/>
            <person name="Kyrpides N."/>
            <person name="Kim E."/>
            <person name="Ensigns S.A."/>
            <person name="Richardson P."/>
        </authorList>
    </citation>
    <scope>NUCLEOTIDE SEQUENCE [LARGE SCALE GENOMIC DNA]</scope>
    <source>
        <strain>ATCC BAA-1158 / Py2</strain>
    </source>
</reference>
<accession>A7IGL7</accession>
<sequence length="371" mass="40094">MTTRRTGRAEKTLRETTAMPTADHRAAPGITLACALEEWAGEDARRRDVAATLNALAAGTIQIARAIAEGPLAGDLARTLSSGEAGEGQKALDIISNDMVIDALRKAPVAAVASEENDAPVLLDPEAPLLVAIDPLDGSSNIDTDISVGTIFAVFPHQDGTDAASVTAFLQNGRDMLAGGYVIYGPHTALMLTVGAGTWHFALDRDGSFRLVNAAVRVKEDAAEFAINMSNYHHWDDPIRAYVDDCLAGRKGPREREFNMRWVASMVADAHRIFQRGGIYLYPGDGRKGYTHGRLRLLYEAFPVAFLMEQAQGSAIDGRSSILDLSATGVHQRVPFIFGSRDEVARAARYHLEPSGHGERSPLFARRGLFI</sequence>
<proteinExistence type="inferred from homology"/>
<protein>
    <recommendedName>
        <fullName evidence="1">Fructose-1,6-bisphosphatase class 1 1</fullName>
        <shortName evidence="1">FBPase class 1 1</shortName>
        <ecNumber evidence="1">3.1.3.11</ecNumber>
    </recommendedName>
    <alternativeName>
        <fullName evidence="1">D-fructose-1,6-bisphosphate 1-phosphohydrolase class 1 1</fullName>
    </alternativeName>
</protein>
<keyword id="KW-0119">Carbohydrate metabolism</keyword>
<keyword id="KW-0963">Cytoplasm</keyword>
<keyword id="KW-0378">Hydrolase</keyword>
<keyword id="KW-0460">Magnesium</keyword>
<keyword id="KW-0479">Metal-binding</keyword>
<keyword id="KW-1185">Reference proteome</keyword>
<feature type="chain" id="PRO_0000364748" description="Fructose-1,6-bisphosphatase class 1 1">
    <location>
        <begin position="1"/>
        <end position="371"/>
    </location>
</feature>
<feature type="binding site" evidence="1">
    <location>
        <position position="115"/>
    </location>
    <ligand>
        <name>Mg(2+)</name>
        <dbReference type="ChEBI" id="CHEBI:18420"/>
        <label>1</label>
    </ligand>
</feature>
<feature type="binding site" evidence="1">
    <location>
        <position position="134"/>
    </location>
    <ligand>
        <name>Mg(2+)</name>
        <dbReference type="ChEBI" id="CHEBI:18420"/>
        <label>1</label>
    </ligand>
</feature>
<feature type="binding site" evidence="1">
    <location>
        <position position="134"/>
    </location>
    <ligand>
        <name>Mg(2+)</name>
        <dbReference type="ChEBI" id="CHEBI:18420"/>
        <label>2</label>
    </ligand>
</feature>
<feature type="binding site" evidence="1">
    <location>
        <position position="136"/>
    </location>
    <ligand>
        <name>Mg(2+)</name>
        <dbReference type="ChEBI" id="CHEBI:18420"/>
        <label>1</label>
    </ligand>
</feature>
<feature type="binding site" evidence="1">
    <location>
        <begin position="137"/>
        <end position="140"/>
    </location>
    <ligand>
        <name>substrate</name>
    </ligand>
</feature>
<feature type="binding site" evidence="1">
    <location>
        <position position="137"/>
    </location>
    <ligand>
        <name>Mg(2+)</name>
        <dbReference type="ChEBI" id="CHEBI:18420"/>
        <label>2</label>
    </ligand>
</feature>
<feature type="binding site" evidence="1">
    <location>
        <position position="228"/>
    </location>
    <ligand>
        <name>substrate</name>
    </ligand>
</feature>
<feature type="binding site" evidence="1">
    <location>
        <begin position="280"/>
        <end position="282"/>
    </location>
    <ligand>
        <name>substrate</name>
    </ligand>
</feature>
<feature type="binding site" evidence="1">
    <location>
        <position position="300"/>
    </location>
    <ligand>
        <name>Mg(2+)</name>
        <dbReference type="ChEBI" id="CHEBI:18420"/>
        <label>2</label>
    </ligand>
</feature>
<evidence type="ECO:0000255" key="1">
    <source>
        <dbReference type="HAMAP-Rule" id="MF_01855"/>
    </source>
</evidence>
<name>F16A1_XANP2</name>